<evidence type="ECO:0000255" key="1">
    <source>
        <dbReference type="HAMAP-Rule" id="MF_00360"/>
    </source>
</evidence>
<evidence type="ECO:0000256" key="2">
    <source>
        <dbReference type="SAM" id="MobiDB-lite"/>
    </source>
</evidence>
<evidence type="ECO:0000305" key="3"/>
<protein>
    <recommendedName>
        <fullName evidence="1">Small ribosomal subunit protein bS6</fullName>
    </recommendedName>
    <alternativeName>
        <fullName evidence="3">30S ribosomal protein S6</fullName>
    </alternativeName>
</protein>
<sequence length="124" mass="14363">MRHYEIVFIVHPDQSEQVPAMIERYKQLVTSQNGQIHRVEDWGRRQMAYMIQKLAKAHYVCLNIECGKDTLAELEHAFKFNDAVLRHLIVQTKKAETAPSPMMKEVQREEARKAAQTTTEGQPA</sequence>
<keyword id="KW-1185">Reference proteome</keyword>
<keyword id="KW-0687">Ribonucleoprotein</keyword>
<keyword id="KW-0689">Ribosomal protein</keyword>
<keyword id="KW-0694">RNA-binding</keyword>
<keyword id="KW-0699">rRNA-binding</keyword>
<proteinExistence type="inferred from homology"/>
<organism>
    <name type="scientific">Cupriavidus metallidurans (strain ATCC 43123 / DSM 2839 / NBRC 102507 / CH34)</name>
    <name type="common">Ralstonia metallidurans</name>
    <dbReference type="NCBI Taxonomy" id="266264"/>
    <lineage>
        <taxon>Bacteria</taxon>
        <taxon>Pseudomonadati</taxon>
        <taxon>Pseudomonadota</taxon>
        <taxon>Betaproteobacteria</taxon>
        <taxon>Burkholderiales</taxon>
        <taxon>Burkholderiaceae</taxon>
        <taxon>Cupriavidus</taxon>
    </lineage>
</organism>
<gene>
    <name evidence="1" type="primary">rpsF</name>
    <name type="ordered locus">Rmet_1979</name>
</gene>
<feature type="chain" id="PRO_1000005325" description="Small ribosomal subunit protein bS6">
    <location>
        <begin position="1"/>
        <end position="124"/>
    </location>
</feature>
<feature type="region of interest" description="Disordered" evidence="2">
    <location>
        <begin position="96"/>
        <end position="124"/>
    </location>
</feature>
<feature type="compositionally biased region" description="Polar residues" evidence="2">
    <location>
        <begin position="115"/>
        <end position="124"/>
    </location>
</feature>
<name>RS6_CUPMC</name>
<reference key="1">
    <citation type="journal article" date="2010" name="PLoS ONE">
        <title>The complete genome sequence of Cupriavidus metallidurans strain CH34, a master survivalist in harsh and anthropogenic environments.</title>
        <authorList>
            <person name="Janssen P.J."/>
            <person name="Van Houdt R."/>
            <person name="Moors H."/>
            <person name="Monsieurs P."/>
            <person name="Morin N."/>
            <person name="Michaux A."/>
            <person name="Benotmane M.A."/>
            <person name="Leys N."/>
            <person name="Vallaeys T."/>
            <person name="Lapidus A."/>
            <person name="Monchy S."/>
            <person name="Medigue C."/>
            <person name="Taghavi S."/>
            <person name="McCorkle S."/>
            <person name="Dunn J."/>
            <person name="van der Lelie D."/>
            <person name="Mergeay M."/>
        </authorList>
    </citation>
    <scope>NUCLEOTIDE SEQUENCE [LARGE SCALE GENOMIC DNA]</scope>
    <source>
        <strain>ATCC 43123 / DSM 2839 / NBRC 102507 / CH34</strain>
    </source>
</reference>
<accession>Q1LLW8</accession>
<comment type="function">
    <text evidence="1">Binds together with bS18 to 16S ribosomal RNA.</text>
</comment>
<comment type="similarity">
    <text evidence="1">Belongs to the bacterial ribosomal protein bS6 family.</text>
</comment>
<dbReference type="EMBL" id="CP000352">
    <property type="protein sequence ID" value="ABF08858.1"/>
    <property type="molecule type" value="Genomic_DNA"/>
</dbReference>
<dbReference type="RefSeq" id="WP_008650672.1">
    <property type="nucleotide sequence ID" value="NC_007973.1"/>
</dbReference>
<dbReference type="SMR" id="Q1LLW8"/>
<dbReference type="STRING" id="266264.Rmet_1979"/>
<dbReference type="GeneID" id="60821415"/>
<dbReference type="KEGG" id="rme:Rmet_1979"/>
<dbReference type="eggNOG" id="COG0360">
    <property type="taxonomic scope" value="Bacteria"/>
</dbReference>
<dbReference type="HOGENOM" id="CLU_113441_6_1_4"/>
<dbReference type="Proteomes" id="UP000002429">
    <property type="component" value="Chromosome"/>
</dbReference>
<dbReference type="GO" id="GO:0022627">
    <property type="term" value="C:cytosolic small ribosomal subunit"/>
    <property type="evidence" value="ECO:0007669"/>
    <property type="project" value="TreeGrafter"/>
</dbReference>
<dbReference type="GO" id="GO:0070181">
    <property type="term" value="F:small ribosomal subunit rRNA binding"/>
    <property type="evidence" value="ECO:0007669"/>
    <property type="project" value="TreeGrafter"/>
</dbReference>
<dbReference type="GO" id="GO:0003735">
    <property type="term" value="F:structural constituent of ribosome"/>
    <property type="evidence" value="ECO:0007669"/>
    <property type="project" value="InterPro"/>
</dbReference>
<dbReference type="GO" id="GO:0006412">
    <property type="term" value="P:translation"/>
    <property type="evidence" value="ECO:0007669"/>
    <property type="project" value="UniProtKB-UniRule"/>
</dbReference>
<dbReference type="CDD" id="cd00473">
    <property type="entry name" value="bS6"/>
    <property type="match status" value="1"/>
</dbReference>
<dbReference type="Gene3D" id="3.30.70.60">
    <property type="match status" value="1"/>
</dbReference>
<dbReference type="HAMAP" id="MF_00360">
    <property type="entry name" value="Ribosomal_bS6"/>
    <property type="match status" value="1"/>
</dbReference>
<dbReference type="InterPro" id="IPR000529">
    <property type="entry name" value="Ribosomal_bS6"/>
</dbReference>
<dbReference type="InterPro" id="IPR035980">
    <property type="entry name" value="Ribosomal_bS6_sf"/>
</dbReference>
<dbReference type="InterPro" id="IPR020814">
    <property type="entry name" value="Ribosomal_S6_plastid/chlpt"/>
</dbReference>
<dbReference type="InterPro" id="IPR014717">
    <property type="entry name" value="Transl_elong_EF1B/ribsomal_bS6"/>
</dbReference>
<dbReference type="NCBIfam" id="TIGR00166">
    <property type="entry name" value="S6"/>
    <property type="match status" value="1"/>
</dbReference>
<dbReference type="PANTHER" id="PTHR21011">
    <property type="entry name" value="MITOCHONDRIAL 28S RIBOSOMAL PROTEIN S6"/>
    <property type="match status" value="1"/>
</dbReference>
<dbReference type="PANTHER" id="PTHR21011:SF1">
    <property type="entry name" value="SMALL RIBOSOMAL SUBUNIT PROTEIN BS6M"/>
    <property type="match status" value="1"/>
</dbReference>
<dbReference type="Pfam" id="PF01250">
    <property type="entry name" value="Ribosomal_S6"/>
    <property type="match status" value="1"/>
</dbReference>
<dbReference type="SUPFAM" id="SSF54995">
    <property type="entry name" value="Ribosomal protein S6"/>
    <property type="match status" value="1"/>
</dbReference>